<proteinExistence type="evidence at transcript level"/>
<comment type="function">
    <text evidence="1">Catalyzes the NADPH-dependent reduction of several pentoses, tetroses, trioses, alpha-dicarbonyl compounds and L-xylulose. Participates in the uronate cycle of glucose metabolism. May play a role in the water absorption and cellular osmoregulation in the proximal renal tubules by producing xylitol, an osmolyte, thereby preventing osmolytic stress from occurring in the renal tubules (By similarity).</text>
</comment>
<comment type="catalytic activity">
    <reaction>
        <text>xylitol + NADP(+) = L-xylulose + NADPH + H(+)</text>
        <dbReference type="Rhea" id="RHEA:17025"/>
        <dbReference type="ChEBI" id="CHEBI:15378"/>
        <dbReference type="ChEBI" id="CHEBI:17151"/>
        <dbReference type="ChEBI" id="CHEBI:17399"/>
        <dbReference type="ChEBI" id="CHEBI:57783"/>
        <dbReference type="ChEBI" id="CHEBI:58349"/>
        <dbReference type="EC" id="1.1.1.10"/>
    </reaction>
</comment>
<comment type="subunit">
    <text evidence="1">Homotetramer.</text>
</comment>
<comment type="subcellular location">
    <subcellularLocation>
        <location evidence="1">Membrane</location>
        <topology evidence="1">Peripheral membrane protein</topology>
    </subcellularLocation>
    <text evidence="1">Probably recruited to membranes via an interaction with phosphatidylinositol.</text>
</comment>
<comment type="similarity">
    <text evidence="4">Belongs to the short-chain dehydrogenases/reductases (SDR) family.</text>
</comment>
<dbReference type="EC" id="1.1.1.10"/>
<dbReference type="EMBL" id="BT025479">
    <property type="protein sequence ID" value="ABF57435.1"/>
    <property type="molecule type" value="mRNA"/>
</dbReference>
<dbReference type="RefSeq" id="NP_001069359.1">
    <property type="nucleotide sequence ID" value="NM_001075891.1"/>
</dbReference>
<dbReference type="SMR" id="Q1JP75"/>
<dbReference type="FunCoup" id="Q1JP75">
    <property type="interactions" value="536"/>
</dbReference>
<dbReference type="STRING" id="9913.ENSBTAP00000071030"/>
<dbReference type="PaxDb" id="9913-ENSBTAP00000048055"/>
<dbReference type="PeptideAtlas" id="Q1JP75"/>
<dbReference type="Ensembl" id="ENSBTAT00000085766.2">
    <property type="protein sequence ID" value="ENSBTAP00000071030.1"/>
    <property type="gene ID" value="ENSBTAG00000051698.2"/>
</dbReference>
<dbReference type="GeneID" id="526937"/>
<dbReference type="KEGG" id="bta:526937"/>
<dbReference type="CTD" id="51181"/>
<dbReference type="VEuPathDB" id="HostDB:ENSBTAG00000051698"/>
<dbReference type="eggNOG" id="KOG1207">
    <property type="taxonomic scope" value="Eukaryota"/>
</dbReference>
<dbReference type="GeneTree" id="ENSGT00940000154873"/>
<dbReference type="HOGENOM" id="CLU_010194_1_1_1"/>
<dbReference type="InParanoid" id="Q1JP75"/>
<dbReference type="OMA" id="KMTRADW"/>
<dbReference type="OrthoDB" id="1393670at2759"/>
<dbReference type="TreeFam" id="TF313841"/>
<dbReference type="Reactome" id="R-BTA-5661270">
    <property type="pathway name" value="Formation of xylulose-5-phosphate"/>
</dbReference>
<dbReference type="Proteomes" id="UP000009136">
    <property type="component" value="Chromosome 19"/>
</dbReference>
<dbReference type="Bgee" id="ENSBTAG00000051698">
    <property type="expression patterns" value="Expressed in cortex of kidney and 94 other cell types or tissues"/>
</dbReference>
<dbReference type="GO" id="GO:0005881">
    <property type="term" value="C:cytoplasmic microtubule"/>
    <property type="evidence" value="ECO:0000250"/>
    <property type="project" value="UniProtKB"/>
</dbReference>
<dbReference type="GO" id="GO:0016020">
    <property type="term" value="C:membrane"/>
    <property type="evidence" value="ECO:0007669"/>
    <property type="project" value="UniProtKB-SubCell"/>
</dbReference>
<dbReference type="GO" id="GO:0004090">
    <property type="term" value="F:carbonyl reductase (NADPH) activity"/>
    <property type="evidence" value="ECO:0000318"/>
    <property type="project" value="GO_Central"/>
</dbReference>
<dbReference type="GO" id="GO:0050038">
    <property type="term" value="F:L-xylulose reductase (NADPH) activity"/>
    <property type="evidence" value="ECO:0000318"/>
    <property type="project" value="GO_Central"/>
</dbReference>
<dbReference type="GO" id="GO:0042732">
    <property type="term" value="P:D-xylose metabolic process"/>
    <property type="evidence" value="ECO:0007669"/>
    <property type="project" value="UniProtKB-KW"/>
</dbReference>
<dbReference type="GO" id="GO:0006006">
    <property type="term" value="P:glucose metabolic process"/>
    <property type="evidence" value="ECO:0000318"/>
    <property type="project" value="GO_Central"/>
</dbReference>
<dbReference type="GO" id="GO:0005997">
    <property type="term" value="P:xylulose metabolic process"/>
    <property type="evidence" value="ECO:0000318"/>
    <property type="project" value="GO_Central"/>
</dbReference>
<dbReference type="CDD" id="cd05351">
    <property type="entry name" value="XR_like_SDR_c"/>
    <property type="match status" value="1"/>
</dbReference>
<dbReference type="FunFam" id="3.40.50.720:FF:000214">
    <property type="entry name" value="L-xylulose reductase"/>
    <property type="match status" value="1"/>
</dbReference>
<dbReference type="Gene3D" id="3.40.50.720">
    <property type="entry name" value="NAD(P)-binding Rossmann-like Domain"/>
    <property type="match status" value="1"/>
</dbReference>
<dbReference type="InterPro" id="IPR051737">
    <property type="entry name" value="L-xylulose/Carbonyl_redctase"/>
</dbReference>
<dbReference type="InterPro" id="IPR036291">
    <property type="entry name" value="NAD(P)-bd_dom_sf"/>
</dbReference>
<dbReference type="InterPro" id="IPR020904">
    <property type="entry name" value="Sc_DH/Rdtase_CS"/>
</dbReference>
<dbReference type="InterPro" id="IPR002347">
    <property type="entry name" value="SDR_fam"/>
</dbReference>
<dbReference type="PANTHER" id="PTHR44252">
    <property type="entry name" value="D-ERYTHRULOSE REDUCTASE"/>
    <property type="match status" value="1"/>
</dbReference>
<dbReference type="PANTHER" id="PTHR44252:SF2">
    <property type="entry name" value="L-XYLULOSE REDUCTASE"/>
    <property type="match status" value="1"/>
</dbReference>
<dbReference type="Pfam" id="PF13561">
    <property type="entry name" value="adh_short_C2"/>
    <property type="match status" value="1"/>
</dbReference>
<dbReference type="PRINTS" id="PR00081">
    <property type="entry name" value="GDHRDH"/>
</dbReference>
<dbReference type="PRINTS" id="PR00080">
    <property type="entry name" value="SDRFAMILY"/>
</dbReference>
<dbReference type="SUPFAM" id="SSF51735">
    <property type="entry name" value="NAD(P)-binding Rossmann-fold domains"/>
    <property type="match status" value="1"/>
</dbReference>
<dbReference type="PROSITE" id="PS00061">
    <property type="entry name" value="ADH_SHORT"/>
    <property type="match status" value="1"/>
</dbReference>
<organism>
    <name type="scientific">Bos taurus</name>
    <name type="common">Bovine</name>
    <dbReference type="NCBI Taxonomy" id="9913"/>
    <lineage>
        <taxon>Eukaryota</taxon>
        <taxon>Metazoa</taxon>
        <taxon>Chordata</taxon>
        <taxon>Craniata</taxon>
        <taxon>Vertebrata</taxon>
        <taxon>Euteleostomi</taxon>
        <taxon>Mammalia</taxon>
        <taxon>Eutheria</taxon>
        <taxon>Laurasiatheria</taxon>
        <taxon>Artiodactyla</taxon>
        <taxon>Ruminantia</taxon>
        <taxon>Pecora</taxon>
        <taxon>Bovidae</taxon>
        <taxon>Bovinae</taxon>
        <taxon>Bos</taxon>
    </lineage>
</organism>
<keyword id="KW-0007">Acetylation</keyword>
<keyword id="KW-0119">Carbohydrate metabolism</keyword>
<keyword id="KW-0313">Glucose metabolism</keyword>
<keyword id="KW-0472">Membrane</keyword>
<keyword id="KW-0488">Methylation</keyword>
<keyword id="KW-0521">NADP</keyword>
<keyword id="KW-0560">Oxidoreductase</keyword>
<keyword id="KW-0597">Phosphoprotein</keyword>
<keyword id="KW-1185">Reference proteome</keyword>
<keyword id="KW-0859">Xylose metabolism</keyword>
<name>DCXR_BOVIN</name>
<gene>
    <name type="primary">DCXR</name>
</gene>
<accession>Q1JP75</accession>
<evidence type="ECO:0000250" key="1"/>
<evidence type="ECO:0000250" key="2">
    <source>
        <dbReference type="UniProtKB" id="Q7Z4W1"/>
    </source>
</evidence>
<evidence type="ECO:0000255" key="3">
    <source>
        <dbReference type="PROSITE-ProRule" id="PRU10001"/>
    </source>
</evidence>
<evidence type="ECO:0000305" key="4"/>
<feature type="chain" id="PRO_0000259351" description="L-xylulose reductase">
    <location>
        <begin position="1"/>
        <end position="244"/>
    </location>
</feature>
<feature type="active site" description="Proton acceptor" evidence="3">
    <location>
        <position position="149"/>
    </location>
</feature>
<feature type="active site" evidence="1">
    <location>
        <position position="153"/>
    </location>
</feature>
<feature type="binding site" evidence="1">
    <location>
        <begin position="11"/>
        <end position="39"/>
    </location>
    <ligand>
        <name>NADP(+)</name>
        <dbReference type="ChEBI" id="CHEBI:58349"/>
    </ligand>
</feature>
<feature type="binding site" evidence="1">
    <location>
        <position position="136"/>
    </location>
    <ligand>
        <name>substrate</name>
    </ligand>
</feature>
<feature type="modified residue" description="N-acetylmethionine" evidence="2">
    <location>
        <position position="1"/>
    </location>
</feature>
<feature type="modified residue" description="Omega-N-methylarginine" evidence="2">
    <location>
        <position position="21"/>
    </location>
</feature>
<feature type="modified residue" description="Phosphoserine" evidence="2">
    <location>
        <position position="46"/>
    </location>
</feature>
<reference key="1">
    <citation type="journal article" date="2005" name="BMC Genomics">
        <title>Characterization of 954 bovine full-CDS cDNA sequences.</title>
        <authorList>
            <person name="Harhay G.P."/>
            <person name="Sonstegard T.S."/>
            <person name="Keele J.W."/>
            <person name="Heaton M.P."/>
            <person name="Clawson M.L."/>
            <person name="Snelling W.M."/>
            <person name="Wiedmann R.T."/>
            <person name="Van Tassell C.P."/>
            <person name="Smith T.P.L."/>
        </authorList>
    </citation>
    <scope>NUCLEOTIDE SEQUENCE [LARGE SCALE MRNA]</scope>
</reference>
<protein>
    <recommendedName>
        <fullName>L-xylulose reductase</fullName>
        <shortName>XR</shortName>
        <ecNumber>1.1.1.10</ecNumber>
    </recommendedName>
    <alternativeName>
        <fullName>Dicarbonyl/L-xylulose reductase</fullName>
    </alternativeName>
</protein>
<sequence length="244" mass="25650">MDLRLAGRRALVTGAGKGIGRSIVKALHAAGARVVAVSRTQADLDSLVRECPGVETVCVDLADWEATEQALGGVGPVDLLVNNAAVAFLQPFLEVTKEAYDMSFSVNLRAVIQVSQIVARGLIARGAPGVIVNVSSQASQRGLTNHSVYCSTKGALDTLTKVMAVELGPHKIRVNAVNPTVVMTPMGQAAWSDPQKAKAMLDRIPLGRFAEVENVVDTILFLLSDRSSMTTGSTVPVDGGFLAT</sequence>